<evidence type="ECO:0000250" key="1">
    <source>
        <dbReference type="UniProtKB" id="P03901"/>
    </source>
</evidence>
<evidence type="ECO:0000250" key="2">
    <source>
        <dbReference type="UniProtKB" id="P03902"/>
    </source>
</evidence>
<evidence type="ECO:0000255" key="3"/>
<evidence type="ECO:0000305" key="4"/>
<proteinExistence type="inferred from homology"/>
<keyword id="KW-0249">Electron transport</keyword>
<keyword id="KW-0472">Membrane</keyword>
<keyword id="KW-0496">Mitochondrion</keyword>
<keyword id="KW-0999">Mitochondrion inner membrane</keyword>
<keyword id="KW-0520">NAD</keyword>
<keyword id="KW-0679">Respiratory chain</keyword>
<keyword id="KW-1278">Translocase</keyword>
<keyword id="KW-0812">Transmembrane</keyword>
<keyword id="KW-1133">Transmembrane helix</keyword>
<keyword id="KW-0813">Transport</keyword>
<keyword id="KW-0830">Ubiquinone</keyword>
<reference key="1">
    <citation type="journal article" date="2003" name="Proc. Natl. Acad. Sci. U.S.A.">
        <title>A molecular approach to comparative phylogeography of extant Malagasy lemurs.</title>
        <authorList>
            <person name="Pastorini J."/>
            <person name="Thalmann U."/>
            <person name="Martin R.D."/>
        </authorList>
    </citation>
    <scope>NUCLEOTIDE SEQUENCE [GENOMIC DNA]</scope>
</reference>
<geneLocation type="mitochondrion"/>
<comment type="function">
    <text evidence="1">Core subunit of the mitochondrial membrane respiratory chain NADH dehydrogenase (Complex I) which catalyzes electron transfer from NADH through the respiratory chain, using ubiquinone as an electron acceptor. Part of the enzyme membrane arm which is embedded in the lipid bilayer and involved in proton translocation.</text>
</comment>
<comment type="catalytic activity">
    <reaction evidence="1">
        <text>a ubiquinone + NADH + 5 H(+)(in) = a ubiquinol + NAD(+) + 4 H(+)(out)</text>
        <dbReference type="Rhea" id="RHEA:29091"/>
        <dbReference type="Rhea" id="RHEA-COMP:9565"/>
        <dbReference type="Rhea" id="RHEA-COMP:9566"/>
        <dbReference type="ChEBI" id="CHEBI:15378"/>
        <dbReference type="ChEBI" id="CHEBI:16389"/>
        <dbReference type="ChEBI" id="CHEBI:17976"/>
        <dbReference type="ChEBI" id="CHEBI:57540"/>
        <dbReference type="ChEBI" id="CHEBI:57945"/>
        <dbReference type="EC" id="7.1.1.2"/>
    </reaction>
    <physiologicalReaction direction="left-to-right" evidence="1">
        <dbReference type="Rhea" id="RHEA:29092"/>
    </physiologicalReaction>
</comment>
<comment type="subunit">
    <text evidence="2">Core subunit of respiratory chain NADH dehydrogenase (Complex I) which is composed of 45 different subunits.</text>
</comment>
<comment type="subcellular location">
    <subcellularLocation>
        <location evidence="2">Mitochondrion inner membrane</location>
        <topology evidence="3">Multi-pass membrane protein</topology>
    </subcellularLocation>
</comment>
<comment type="similarity">
    <text evidence="4">Belongs to the complex I subunit 4L family.</text>
</comment>
<accession>Q94PA4</accession>
<protein>
    <recommendedName>
        <fullName>NADH-ubiquinone oxidoreductase chain 4L</fullName>
        <ecNumber>7.1.1.2</ecNumber>
    </recommendedName>
    <alternativeName>
        <fullName>NADH dehydrogenase subunit 4L</fullName>
    </alternativeName>
</protein>
<sequence>MPSISINITLAFTTALLGMLMFRSHMMSSLLCLEGMMLSMFILSTLIILNVQLTMSFMMPILLLVFAACEAAIGLALLVMISNTYGLDYIQNLNLLQC</sequence>
<feature type="chain" id="PRO_0000275063" description="NADH-ubiquinone oxidoreductase chain 4L">
    <location>
        <begin position="1"/>
        <end position="98"/>
    </location>
</feature>
<feature type="transmembrane region" description="Helical" evidence="3">
    <location>
        <begin position="2"/>
        <end position="22"/>
    </location>
</feature>
<feature type="transmembrane region" description="Helical" evidence="3">
    <location>
        <begin position="29"/>
        <end position="49"/>
    </location>
</feature>
<feature type="transmembrane region" description="Helical" evidence="3">
    <location>
        <begin position="61"/>
        <end position="81"/>
    </location>
</feature>
<name>NU4LM_MIRCO</name>
<dbReference type="EC" id="7.1.1.2"/>
<dbReference type="EMBL" id="AF224621">
    <property type="protein sequence ID" value="AAK70537.1"/>
    <property type="molecule type" value="Genomic_DNA"/>
</dbReference>
<dbReference type="EMBL" id="AF224622">
    <property type="protein sequence ID" value="AAK70541.1"/>
    <property type="molecule type" value="Genomic_DNA"/>
</dbReference>
<dbReference type="EMBL" id="AF224623">
    <property type="protein sequence ID" value="AAK70545.1"/>
    <property type="molecule type" value="Genomic_DNA"/>
</dbReference>
<dbReference type="SMR" id="Q94PA4"/>
<dbReference type="GO" id="GO:0005743">
    <property type="term" value="C:mitochondrial inner membrane"/>
    <property type="evidence" value="ECO:0000250"/>
    <property type="project" value="UniProtKB"/>
</dbReference>
<dbReference type="GO" id="GO:0045271">
    <property type="term" value="C:respiratory chain complex I"/>
    <property type="evidence" value="ECO:0000250"/>
    <property type="project" value="UniProtKB"/>
</dbReference>
<dbReference type="GO" id="GO:0008137">
    <property type="term" value="F:NADH dehydrogenase (ubiquinone) activity"/>
    <property type="evidence" value="ECO:0000250"/>
    <property type="project" value="UniProtKB"/>
</dbReference>
<dbReference type="GO" id="GO:0042773">
    <property type="term" value="P:ATP synthesis coupled electron transport"/>
    <property type="evidence" value="ECO:0007669"/>
    <property type="project" value="InterPro"/>
</dbReference>
<dbReference type="FunFam" id="1.10.287.3510:FF:000002">
    <property type="entry name" value="NADH-ubiquinone oxidoreductase chain 4L"/>
    <property type="match status" value="1"/>
</dbReference>
<dbReference type="Gene3D" id="1.10.287.3510">
    <property type="match status" value="1"/>
</dbReference>
<dbReference type="InterPro" id="IPR001133">
    <property type="entry name" value="NADH_UbQ_OxRdtase_chain4L/K"/>
</dbReference>
<dbReference type="InterPro" id="IPR039428">
    <property type="entry name" value="NUOK/Mnh_C1-like"/>
</dbReference>
<dbReference type="PANTHER" id="PTHR11434:SF0">
    <property type="entry name" value="NADH-UBIQUINONE OXIDOREDUCTASE CHAIN 4L"/>
    <property type="match status" value="1"/>
</dbReference>
<dbReference type="PANTHER" id="PTHR11434">
    <property type="entry name" value="NADH-UBIQUINONE OXIDOREDUCTASE SUBUNIT ND4L"/>
    <property type="match status" value="1"/>
</dbReference>
<dbReference type="Pfam" id="PF00420">
    <property type="entry name" value="Oxidored_q2"/>
    <property type="match status" value="1"/>
</dbReference>
<organism>
    <name type="scientific">Mirza coquereli</name>
    <name type="common">Coquerel's giant mouse lemur</name>
    <name type="synonym">Microcebus coquereli</name>
    <dbReference type="NCBI Taxonomy" id="47180"/>
    <lineage>
        <taxon>Eukaryota</taxon>
        <taxon>Metazoa</taxon>
        <taxon>Chordata</taxon>
        <taxon>Craniata</taxon>
        <taxon>Vertebrata</taxon>
        <taxon>Euteleostomi</taxon>
        <taxon>Mammalia</taxon>
        <taxon>Eutheria</taxon>
        <taxon>Euarchontoglires</taxon>
        <taxon>Primates</taxon>
        <taxon>Strepsirrhini</taxon>
        <taxon>Lemuriformes</taxon>
        <taxon>Cheirogaleidae</taxon>
        <taxon>Mirza</taxon>
    </lineage>
</organism>
<gene>
    <name type="primary">MT-ND4L</name>
    <name type="synonym">MTND4L</name>
    <name type="synonym">NADH4L</name>
    <name type="synonym">ND4L</name>
</gene>